<accession>B8I9T7</accession>
<name>TATA_METNO</name>
<gene>
    <name evidence="1" type="primary">tatA</name>
    <name type="ordered locus">Mnod_2183</name>
</gene>
<evidence type="ECO:0000255" key="1">
    <source>
        <dbReference type="HAMAP-Rule" id="MF_00236"/>
    </source>
</evidence>
<evidence type="ECO:0000256" key="2">
    <source>
        <dbReference type="SAM" id="MobiDB-lite"/>
    </source>
</evidence>
<protein>
    <recommendedName>
        <fullName evidence="1">Sec-independent protein translocase protein TatA</fullName>
    </recommendedName>
</protein>
<feature type="chain" id="PRO_1000197879" description="Sec-independent protein translocase protein TatA">
    <location>
        <begin position="1"/>
        <end position="90"/>
    </location>
</feature>
<feature type="transmembrane region" description="Helical" evidence="1">
    <location>
        <begin position="1"/>
        <end position="21"/>
    </location>
</feature>
<feature type="region of interest" description="Disordered" evidence="2">
    <location>
        <begin position="42"/>
        <end position="90"/>
    </location>
</feature>
<reference key="1">
    <citation type="submission" date="2009-01" db="EMBL/GenBank/DDBJ databases">
        <title>Complete sequence of chromosome of Methylobacterium nodulans ORS 2060.</title>
        <authorList>
            <consortium name="US DOE Joint Genome Institute"/>
            <person name="Lucas S."/>
            <person name="Copeland A."/>
            <person name="Lapidus A."/>
            <person name="Glavina del Rio T."/>
            <person name="Dalin E."/>
            <person name="Tice H."/>
            <person name="Bruce D."/>
            <person name="Goodwin L."/>
            <person name="Pitluck S."/>
            <person name="Sims D."/>
            <person name="Brettin T."/>
            <person name="Detter J.C."/>
            <person name="Han C."/>
            <person name="Larimer F."/>
            <person name="Land M."/>
            <person name="Hauser L."/>
            <person name="Kyrpides N."/>
            <person name="Ivanova N."/>
            <person name="Marx C.J."/>
            <person name="Richardson P."/>
        </authorList>
    </citation>
    <scope>NUCLEOTIDE SEQUENCE [LARGE SCALE GENOMIC DNA]</scope>
    <source>
        <strain>LMG 21967 / CNCM I-2342 / ORS 2060</strain>
    </source>
</reference>
<comment type="function">
    <text evidence="1">Part of the twin-arginine translocation (Tat) system that transports large folded proteins containing a characteristic twin-arginine motif in their signal peptide across membranes. TatA could form the protein-conducting channel of the Tat system.</text>
</comment>
<comment type="subunit">
    <text evidence="1">The Tat system comprises two distinct complexes: a TatABC complex, containing multiple copies of TatA, TatB and TatC subunits, and a separate TatA complex, containing only TatA subunits. Substrates initially bind to the TatABC complex, which probably triggers association of the separate TatA complex to form the active translocon.</text>
</comment>
<comment type="subcellular location">
    <subcellularLocation>
        <location evidence="1">Cell inner membrane</location>
        <topology evidence="1">Single-pass membrane protein</topology>
    </subcellularLocation>
</comment>
<comment type="similarity">
    <text evidence="1">Belongs to the TatA/E family.</text>
</comment>
<sequence>MGGASIWHWIVVGVIVMLLFGRGKVSELMGDVAKGIKAFKKGMADEDQPQAPVANQSPPPVSATEPVRTLPPHQGEPAPAANASVDRKVG</sequence>
<dbReference type="EMBL" id="CP001349">
    <property type="protein sequence ID" value="ACL57165.1"/>
    <property type="molecule type" value="Genomic_DNA"/>
</dbReference>
<dbReference type="RefSeq" id="WP_015928851.1">
    <property type="nucleotide sequence ID" value="NC_011894.1"/>
</dbReference>
<dbReference type="SMR" id="B8I9T7"/>
<dbReference type="STRING" id="460265.Mnod_2183"/>
<dbReference type="KEGG" id="mno:Mnod_2183"/>
<dbReference type="eggNOG" id="COG1826">
    <property type="taxonomic scope" value="Bacteria"/>
</dbReference>
<dbReference type="HOGENOM" id="CLU_086034_5_0_5"/>
<dbReference type="OrthoDB" id="7161179at2"/>
<dbReference type="Proteomes" id="UP000008207">
    <property type="component" value="Chromosome"/>
</dbReference>
<dbReference type="GO" id="GO:0033281">
    <property type="term" value="C:TAT protein transport complex"/>
    <property type="evidence" value="ECO:0007669"/>
    <property type="project" value="UniProtKB-UniRule"/>
</dbReference>
<dbReference type="GO" id="GO:0008320">
    <property type="term" value="F:protein transmembrane transporter activity"/>
    <property type="evidence" value="ECO:0007669"/>
    <property type="project" value="UniProtKB-UniRule"/>
</dbReference>
<dbReference type="GO" id="GO:0043953">
    <property type="term" value="P:protein transport by the Tat complex"/>
    <property type="evidence" value="ECO:0007669"/>
    <property type="project" value="UniProtKB-UniRule"/>
</dbReference>
<dbReference type="Gene3D" id="1.20.5.3310">
    <property type="match status" value="1"/>
</dbReference>
<dbReference type="HAMAP" id="MF_00236">
    <property type="entry name" value="TatA_E"/>
    <property type="match status" value="1"/>
</dbReference>
<dbReference type="InterPro" id="IPR003369">
    <property type="entry name" value="TatA/B/E"/>
</dbReference>
<dbReference type="InterPro" id="IPR006312">
    <property type="entry name" value="TatA/E"/>
</dbReference>
<dbReference type="NCBIfam" id="NF001940">
    <property type="entry name" value="PRK00720.1"/>
    <property type="match status" value="1"/>
</dbReference>
<dbReference type="NCBIfam" id="TIGR01411">
    <property type="entry name" value="tatAE"/>
    <property type="match status" value="1"/>
</dbReference>
<dbReference type="PANTHER" id="PTHR42982">
    <property type="entry name" value="SEC-INDEPENDENT PROTEIN TRANSLOCASE PROTEIN TATA"/>
    <property type="match status" value="1"/>
</dbReference>
<dbReference type="PANTHER" id="PTHR42982:SF1">
    <property type="entry name" value="SEC-INDEPENDENT PROTEIN TRANSLOCASE PROTEIN TATA"/>
    <property type="match status" value="1"/>
</dbReference>
<dbReference type="Pfam" id="PF02416">
    <property type="entry name" value="TatA_B_E"/>
    <property type="match status" value="1"/>
</dbReference>
<organism>
    <name type="scientific">Methylobacterium nodulans (strain LMG 21967 / CNCM I-2342 / ORS 2060)</name>
    <dbReference type="NCBI Taxonomy" id="460265"/>
    <lineage>
        <taxon>Bacteria</taxon>
        <taxon>Pseudomonadati</taxon>
        <taxon>Pseudomonadota</taxon>
        <taxon>Alphaproteobacteria</taxon>
        <taxon>Hyphomicrobiales</taxon>
        <taxon>Methylobacteriaceae</taxon>
        <taxon>Methylobacterium</taxon>
    </lineage>
</organism>
<keyword id="KW-0997">Cell inner membrane</keyword>
<keyword id="KW-1003">Cell membrane</keyword>
<keyword id="KW-0472">Membrane</keyword>
<keyword id="KW-0653">Protein transport</keyword>
<keyword id="KW-1185">Reference proteome</keyword>
<keyword id="KW-0811">Translocation</keyword>
<keyword id="KW-0812">Transmembrane</keyword>
<keyword id="KW-1133">Transmembrane helix</keyword>
<keyword id="KW-0813">Transport</keyword>
<proteinExistence type="inferred from homology"/>